<evidence type="ECO:0000269" key="1">
    <source>
    </source>
</evidence>
<evidence type="ECO:0007829" key="2">
    <source>
        <dbReference type="PDB" id="4AMQ"/>
    </source>
</evidence>
<protein>
    <recommendedName>
        <fullName>Uncharacterized protein L544</fullName>
    </recommendedName>
</protein>
<comment type="subcellular location">
    <subcellularLocation>
        <location evidence="1">Virion</location>
    </subcellularLocation>
</comment>
<organismHost>
    <name type="scientific">Acanthamoeba polyphaga</name>
    <name type="common">Amoeba</name>
    <dbReference type="NCBI Taxonomy" id="5757"/>
</organismHost>
<feature type="chain" id="PRO_0000243970" description="Uncharacterized protein L544">
    <location>
        <begin position="1"/>
        <end position="387"/>
    </location>
</feature>
<feature type="helix" evidence="2">
    <location>
        <begin position="8"/>
        <end position="17"/>
    </location>
</feature>
<feature type="helix" evidence="2">
    <location>
        <begin position="19"/>
        <end position="22"/>
    </location>
</feature>
<feature type="helix" evidence="2">
    <location>
        <begin position="28"/>
        <end position="30"/>
    </location>
</feature>
<feature type="strand" evidence="2">
    <location>
        <begin position="31"/>
        <end position="34"/>
    </location>
</feature>
<feature type="helix" evidence="2">
    <location>
        <begin position="35"/>
        <end position="38"/>
    </location>
</feature>
<feature type="strand" evidence="2">
    <location>
        <begin position="46"/>
        <end position="52"/>
    </location>
</feature>
<feature type="turn" evidence="2">
    <location>
        <begin position="54"/>
        <end position="56"/>
    </location>
</feature>
<feature type="turn" evidence="2">
    <location>
        <begin position="59"/>
        <end position="61"/>
    </location>
</feature>
<feature type="helix" evidence="2">
    <location>
        <begin position="62"/>
        <end position="73"/>
    </location>
</feature>
<feature type="strand" evidence="2">
    <location>
        <begin position="79"/>
        <end position="88"/>
    </location>
</feature>
<feature type="helix" evidence="2">
    <location>
        <begin position="90"/>
        <end position="92"/>
    </location>
</feature>
<feature type="helix" evidence="2">
    <location>
        <begin position="98"/>
        <end position="105"/>
    </location>
</feature>
<feature type="helix" evidence="2">
    <location>
        <begin position="112"/>
        <end position="115"/>
    </location>
</feature>
<feature type="helix" evidence="2">
    <location>
        <begin position="132"/>
        <end position="143"/>
    </location>
</feature>
<feature type="strand" evidence="2">
    <location>
        <begin position="144"/>
        <end position="147"/>
    </location>
</feature>
<feature type="helix" evidence="2">
    <location>
        <begin position="149"/>
        <end position="154"/>
    </location>
</feature>
<feature type="strand" evidence="2">
    <location>
        <begin position="156"/>
        <end position="158"/>
    </location>
</feature>
<feature type="helix" evidence="2">
    <location>
        <begin position="160"/>
        <end position="162"/>
    </location>
</feature>
<feature type="strand" evidence="2">
    <location>
        <begin position="164"/>
        <end position="166"/>
    </location>
</feature>
<feature type="helix" evidence="2">
    <location>
        <begin position="167"/>
        <end position="172"/>
    </location>
</feature>
<feature type="strand" evidence="2">
    <location>
        <begin position="175"/>
        <end position="184"/>
    </location>
</feature>
<feature type="strand" evidence="2">
    <location>
        <begin position="186"/>
        <end position="197"/>
    </location>
</feature>
<feature type="helix" evidence="2">
    <location>
        <begin position="217"/>
        <end position="219"/>
    </location>
</feature>
<feature type="turn" evidence="2">
    <location>
        <begin position="224"/>
        <end position="227"/>
    </location>
</feature>
<feature type="helix" evidence="2">
    <location>
        <begin position="228"/>
        <end position="234"/>
    </location>
</feature>
<feature type="turn" evidence="2">
    <location>
        <begin position="235"/>
        <end position="237"/>
    </location>
</feature>
<feature type="helix" evidence="2">
    <location>
        <begin position="239"/>
        <end position="250"/>
    </location>
</feature>
<feature type="helix" evidence="2">
    <location>
        <begin position="254"/>
        <end position="272"/>
    </location>
</feature>
<feature type="helix" evidence="2">
    <location>
        <begin position="277"/>
        <end position="291"/>
    </location>
</feature>
<feature type="strand" evidence="2">
    <location>
        <begin position="294"/>
        <end position="296"/>
    </location>
</feature>
<feature type="helix" evidence="2">
    <location>
        <begin position="299"/>
        <end position="311"/>
    </location>
</feature>
<feature type="helix" evidence="2">
    <location>
        <begin position="314"/>
        <end position="348"/>
    </location>
</feature>
<feature type="helix" evidence="2">
    <location>
        <begin position="353"/>
        <end position="356"/>
    </location>
</feature>
<feature type="turn" evidence="2">
    <location>
        <begin position="357"/>
        <end position="360"/>
    </location>
</feature>
<keyword id="KW-0002">3D-structure</keyword>
<keyword id="KW-1185">Reference proteome</keyword>
<keyword id="KW-0946">Virion</keyword>
<reference key="1">
    <citation type="journal article" date="2004" name="Science">
        <title>The 1.2-megabase genome sequence of Mimivirus.</title>
        <authorList>
            <person name="Raoult D."/>
            <person name="Audic S."/>
            <person name="Robert C."/>
            <person name="Abergel C."/>
            <person name="Renesto P."/>
            <person name="Ogata H."/>
            <person name="La Scola B."/>
            <person name="Susan M."/>
            <person name="Claverie J.-M."/>
        </authorList>
    </citation>
    <scope>NUCLEOTIDE SEQUENCE [LARGE SCALE GENOMIC DNA]</scope>
    <source>
        <strain>Rowbotham-Bradford</strain>
    </source>
</reference>
<reference key="2">
    <citation type="journal article" date="2006" name="J. Virol.">
        <title>Mimivirus giant particles incorporate a large fraction of anonymous and unique gene products.</title>
        <authorList>
            <person name="Renesto P."/>
            <person name="Abergel C."/>
            <person name="Decloquement P."/>
            <person name="Moinier D."/>
            <person name="Azza S."/>
            <person name="Ogata H."/>
            <person name="Fourquet P."/>
            <person name="Gorvel J.-P."/>
            <person name="Claverie J.-M."/>
            <person name="Raoult D."/>
        </authorList>
    </citation>
    <scope>IDENTIFICATION BY MASS SPECTROMETRY [LARGE SCALE ANALYSIS]</scope>
    <scope>SUBCELLULAR LOCATION</scope>
</reference>
<accession>Q5UQA5</accession>
<sequence length="387" mass="45873">MRMLIFTYKLERYIKNKILPKILVVPDRDKYQIKGSFRRRIPYITDIDIVNNVHPEYDDTNIYQRIVDLINSFTNDNQIKLIYVICGTDDRFLLTEYSDEEIEKIKILLNPTELVELNNVLSKYQDDLNKKVFYINEIIWDLYKLRWTSSEVLAGKKILRGGIEVSFQDVVKNNSILLLQYFVKIEYYPIGFDIAVRYKPINLITAYQNAAFYQLKLANYSKEYYFMLFPLRFYFKNDPTISKQLEYIIETKFGLYKQLLVRIDSYRTIYESGNLDLDTAKSIIISIIKDIRKLNGIDMNIIDKIQEVSNNSAGQDKIIAWNTLLTQLYTNINKSVNKQSKKYFTRYINIIPKEDRKLCCLEEEHVLQSGGINFESTNFLTKKKLIY</sequence>
<name>YL544_MIMIV</name>
<proteinExistence type="evidence at protein level"/>
<dbReference type="EMBL" id="AY653733">
    <property type="protein sequence ID" value="AAV50808.1"/>
    <property type="molecule type" value="Genomic_DNA"/>
</dbReference>
<dbReference type="PDB" id="4AMQ">
    <property type="method" value="X-ray"/>
    <property type="resolution" value="2.17 A"/>
    <property type="chains" value="A=1-387"/>
</dbReference>
<dbReference type="PDBsum" id="4AMQ"/>
<dbReference type="SMR" id="Q5UQA5"/>
<dbReference type="KEGG" id="vg:9925178"/>
<dbReference type="OrthoDB" id="11314at10239"/>
<dbReference type="EvolutionaryTrace" id="Q5UQA5"/>
<dbReference type="Proteomes" id="UP000001134">
    <property type="component" value="Genome"/>
</dbReference>
<dbReference type="GO" id="GO:0044423">
    <property type="term" value="C:virion component"/>
    <property type="evidence" value="ECO:0007669"/>
    <property type="project" value="UniProtKB-KW"/>
</dbReference>
<dbReference type="InterPro" id="IPR048545">
    <property type="entry name" value="L544-like_helical"/>
</dbReference>
<dbReference type="InterPro" id="IPR048543">
    <property type="entry name" value="L544-like_NTransf"/>
</dbReference>
<dbReference type="Pfam" id="PF21657">
    <property type="entry name" value="L544_helical"/>
    <property type="match status" value="1"/>
</dbReference>
<dbReference type="Pfam" id="PF21655">
    <property type="entry name" value="L544_NTransf"/>
    <property type="match status" value="1"/>
</dbReference>
<gene>
    <name type="ordered locus">MIMI_L544</name>
</gene>
<organism>
    <name type="scientific">Acanthamoeba polyphaga mimivirus</name>
    <name type="common">APMV</name>
    <dbReference type="NCBI Taxonomy" id="212035"/>
    <lineage>
        <taxon>Viruses</taxon>
        <taxon>Varidnaviria</taxon>
        <taxon>Bamfordvirae</taxon>
        <taxon>Nucleocytoviricota</taxon>
        <taxon>Megaviricetes</taxon>
        <taxon>Imitervirales</taxon>
        <taxon>Mimiviridae</taxon>
        <taxon>Megamimivirinae</taxon>
        <taxon>Mimivirus</taxon>
        <taxon>Mimivirus bradfordmassiliense</taxon>
    </lineage>
</organism>